<gene>
    <name evidence="1" type="primary">recO</name>
    <name type="ordered locus">RAF_ORF0741</name>
</gene>
<feature type="chain" id="PRO_1000204108" description="DNA repair protein RecO">
    <location>
        <begin position="1"/>
        <end position="237"/>
    </location>
</feature>
<dbReference type="EMBL" id="CP001612">
    <property type="protein sequence ID" value="ACP53628.1"/>
    <property type="molecule type" value="Genomic_DNA"/>
</dbReference>
<dbReference type="RefSeq" id="WP_012719822.1">
    <property type="nucleotide sequence ID" value="NC_012633.1"/>
</dbReference>
<dbReference type="SMR" id="C3PNW8"/>
<dbReference type="KEGG" id="raf:RAF_ORF0741"/>
<dbReference type="HOGENOM" id="CLU_086029_0_0_5"/>
<dbReference type="Proteomes" id="UP000002305">
    <property type="component" value="Chromosome"/>
</dbReference>
<dbReference type="GO" id="GO:0043590">
    <property type="term" value="C:bacterial nucleoid"/>
    <property type="evidence" value="ECO:0007669"/>
    <property type="project" value="TreeGrafter"/>
</dbReference>
<dbReference type="GO" id="GO:0006310">
    <property type="term" value="P:DNA recombination"/>
    <property type="evidence" value="ECO:0007669"/>
    <property type="project" value="UniProtKB-UniRule"/>
</dbReference>
<dbReference type="GO" id="GO:0006302">
    <property type="term" value="P:double-strand break repair"/>
    <property type="evidence" value="ECO:0007669"/>
    <property type="project" value="TreeGrafter"/>
</dbReference>
<dbReference type="Gene3D" id="1.20.1440.120">
    <property type="entry name" value="Recombination protein O, C-terminal domain"/>
    <property type="match status" value="1"/>
</dbReference>
<dbReference type="HAMAP" id="MF_00201">
    <property type="entry name" value="RecO"/>
    <property type="match status" value="1"/>
</dbReference>
<dbReference type="InterPro" id="IPR037278">
    <property type="entry name" value="ARFGAP/RecO"/>
</dbReference>
<dbReference type="InterPro" id="IPR022572">
    <property type="entry name" value="DNA_rep/recomb_RecO_N"/>
</dbReference>
<dbReference type="InterPro" id="IPR003717">
    <property type="entry name" value="RecO"/>
</dbReference>
<dbReference type="InterPro" id="IPR042242">
    <property type="entry name" value="RecO_C"/>
</dbReference>
<dbReference type="NCBIfam" id="TIGR00613">
    <property type="entry name" value="reco"/>
    <property type="match status" value="1"/>
</dbReference>
<dbReference type="PANTHER" id="PTHR33991">
    <property type="entry name" value="DNA REPAIR PROTEIN RECO"/>
    <property type="match status" value="1"/>
</dbReference>
<dbReference type="PANTHER" id="PTHR33991:SF1">
    <property type="entry name" value="DNA REPAIR PROTEIN RECO"/>
    <property type="match status" value="1"/>
</dbReference>
<dbReference type="Pfam" id="PF02565">
    <property type="entry name" value="RecO_C"/>
    <property type="match status" value="1"/>
</dbReference>
<dbReference type="Pfam" id="PF11967">
    <property type="entry name" value="RecO_N"/>
    <property type="match status" value="1"/>
</dbReference>
<dbReference type="SUPFAM" id="SSF57863">
    <property type="entry name" value="ArfGap/RecO-like zinc finger"/>
    <property type="match status" value="1"/>
</dbReference>
<proteinExistence type="inferred from homology"/>
<comment type="function">
    <text evidence="1">Involved in DNA repair and RecF pathway recombination.</text>
</comment>
<comment type="similarity">
    <text evidence="1">Belongs to the RecO family.</text>
</comment>
<organism>
    <name type="scientific">Rickettsia africae (strain ESF-5)</name>
    <dbReference type="NCBI Taxonomy" id="347255"/>
    <lineage>
        <taxon>Bacteria</taxon>
        <taxon>Pseudomonadati</taxon>
        <taxon>Pseudomonadota</taxon>
        <taxon>Alphaproteobacteria</taxon>
        <taxon>Rickettsiales</taxon>
        <taxon>Rickettsiaceae</taxon>
        <taxon>Rickettsieae</taxon>
        <taxon>Rickettsia</taxon>
        <taxon>spotted fever group</taxon>
    </lineage>
</organism>
<sequence>MNIKDIGVIIAKKTLKENTFIITVFTKNHGLYSGVVKEFSKKSKFIYQEGNIIDFLWQARLHEHIGMAKCELIKSYTGYFITNKAKLYAFNSVISLIKELFHEREEHSKFFSFLINYLDNLSKNFCFRDYINFELALLAETGYKLDLTKCGVSHVTTDLIYVSPKSARALSYAVGKPYKDKLLMLPRFLLSDNSEITLEEKRQALALTNYFFNRYLFHNNRQVEARQTFIEYTLNNF</sequence>
<reference key="1">
    <citation type="journal article" date="2009" name="BMC Genomics">
        <title>Analysis of the Rickettsia africae genome reveals that virulence acquisition in Rickettsia species may be explained by genome reduction.</title>
        <authorList>
            <person name="Fournier P.-E."/>
            <person name="El Karkouri K."/>
            <person name="Leroy Q."/>
            <person name="Robert C."/>
            <person name="Giumelli B."/>
            <person name="Renesto P."/>
            <person name="Socolovschi C."/>
            <person name="Parola P."/>
            <person name="Audic S."/>
            <person name="Raoult D."/>
        </authorList>
    </citation>
    <scope>NUCLEOTIDE SEQUENCE [LARGE SCALE GENOMIC DNA]</scope>
    <source>
        <strain>ESF-5</strain>
    </source>
</reference>
<accession>C3PNW8</accession>
<keyword id="KW-0227">DNA damage</keyword>
<keyword id="KW-0233">DNA recombination</keyword>
<keyword id="KW-0234">DNA repair</keyword>
<name>RECO_RICAE</name>
<evidence type="ECO:0000255" key="1">
    <source>
        <dbReference type="HAMAP-Rule" id="MF_00201"/>
    </source>
</evidence>
<protein>
    <recommendedName>
        <fullName evidence="1">DNA repair protein RecO</fullName>
    </recommendedName>
    <alternativeName>
        <fullName evidence="1">Recombination protein O</fullName>
    </alternativeName>
</protein>